<gene>
    <name evidence="1" type="primary">hisI</name>
    <name type="ordered locus">PA14_66940</name>
</gene>
<accession>Q02EV1</accession>
<comment type="function">
    <text evidence="1">Catalyzes the hydrolysis of the adenine ring of phosphoribosyl-AMP.</text>
</comment>
<comment type="catalytic activity">
    <reaction evidence="1">
        <text>1-(5-phospho-beta-D-ribosyl)-5'-AMP + H2O = 1-(5-phospho-beta-D-ribosyl)-5-[(5-phospho-beta-D-ribosylamino)methylideneamino]imidazole-4-carboxamide</text>
        <dbReference type="Rhea" id="RHEA:20049"/>
        <dbReference type="ChEBI" id="CHEBI:15377"/>
        <dbReference type="ChEBI" id="CHEBI:58435"/>
        <dbReference type="ChEBI" id="CHEBI:59457"/>
        <dbReference type="EC" id="3.5.4.19"/>
    </reaction>
</comment>
<comment type="cofactor">
    <cofactor evidence="1">
        <name>Mg(2+)</name>
        <dbReference type="ChEBI" id="CHEBI:18420"/>
    </cofactor>
    <text evidence="1">Binds 1 Mg(2+) ion per subunit.</text>
</comment>
<comment type="cofactor">
    <cofactor evidence="1">
        <name>Zn(2+)</name>
        <dbReference type="ChEBI" id="CHEBI:29105"/>
    </cofactor>
    <text evidence="1">Binds 1 zinc ion per subunit.</text>
</comment>
<comment type="pathway">
    <text evidence="1">Amino-acid biosynthesis; L-histidine biosynthesis; L-histidine from 5-phospho-alpha-D-ribose 1-diphosphate: step 3/9.</text>
</comment>
<comment type="subunit">
    <text evidence="1">Homodimer.</text>
</comment>
<comment type="subcellular location">
    <subcellularLocation>
        <location evidence="1">Cytoplasm</location>
    </subcellularLocation>
</comment>
<comment type="similarity">
    <text evidence="1">Belongs to the PRA-CH family.</text>
</comment>
<evidence type="ECO:0000255" key="1">
    <source>
        <dbReference type="HAMAP-Rule" id="MF_01021"/>
    </source>
</evidence>
<name>HIS3_PSEAB</name>
<feature type="chain" id="PRO_1000063425" description="Phosphoribosyl-AMP cyclohydrolase">
    <location>
        <begin position="1"/>
        <end position="134"/>
    </location>
</feature>
<feature type="binding site" evidence="1">
    <location>
        <position position="77"/>
    </location>
    <ligand>
        <name>Mg(2+)</name>
        <dbReference type="ChEBI" id="CHEBI:18420"/>
    </ligand>
</feature>
<feature type="binding site" evidence="1">
    <location>
        <position position="78"/>
    </location>
    <ligand>
        <name>Zn(2+)</name>
        <dbReference type="ChEBI" id="CHEBI:29105"/>
        <note>ligand shared between dimeric partners</note>
    </ligand>
</feature>
<feature type="binding site" evidence="1">
    <location>
        <position position="79"/>
    </location>
    <ligand>
        <name>Mg(2+)</name>
        <dbReference type="ChEBI" id="CHEBI:18420"/>
    </ligand>
</feature>
<feature type="binding site" evidence="1">
    <location>
        <position position="81"/>
    </location>
    <ligand>
        <name>Mg(2+)</name>
        <dbReference type="ChEBI" id="CHEBI:18420"/>
    </ligand>
</feature>
<feature type="binding site" evidence="1">
    <location>
        <position position="95"/>
    </location>
    <ligand>
        <name>Zn(2+)</name>
        <dbReference type="ChEBI" id="CHEBI:29105"/>
        <note>ligand shared between dimeric partners</note>
    </ligand>
</feature>
<feature type="binding site" evidence="1">
    <location>
        <position position="102"/>
    </location>
    <ligand>
        <name>Zn(2+)</name>
        <dbReference type="ChEBI" id="CHEBI:29105"/>
        <note>ligand shared between dimeric partners</note>
    </ligand>
</feature>
<keyword id="KW-0028">Amino-acid biosynthesis</keyword>
<keyword id="KW-0963">Cytoplasm</keyword>
<keyword id="KW-0368">Histidine biosynthesis</keyword>
<keyword id="KW-0378">Hydrolase</keyword>
<keyword id="KW-0460">Magnesium</keyword>
<keyword id="KW-0479">Metal-binding</keyword>
<keyword id="KW-0862">Zinc</keyword>
<dbReference type="EC" id="3.5.4.19" evidence="1"/>
<dbReference type="EMBL" id="CP000438">
    <property type="protein sequence ID" value="ABJ14449.1"/>
    <property type="molecule type" value="Genomic_DNA"/>
</dbReference>
<dbReference type="RefSeq" id="WP_003141818.1">
    <property type="nucleotide sequence ID" value="NZ_CP034244.1"/>
</dbReference>
<dbReference type="SMR" id="Q02EV1"/>
<dbReference type="KEGG" id="pau:PA14_66940"/>
<dbReference type="PseudoCAP" id="PA14_66940"/>
<dbReference type="HOGENOM" id="CLU_048577_5_0_6"/>
<dbReference type="BioCyc" id="PAER208963:G1G74-5647-MONOMER"/>
<dbReference type="UniPathway" id="UPA00031">
    <property type="reaction ID" value="UER00008"/>
</dbReference>
<dbReference type="Proteomes" id="UP000000653">
    <property type="component" value="Chromosome"/>
</dbReference>
<dbReference type="GO" id="GO:0005737">
    <property type="term" value="C:cytoplasm"/>
    <property type="evidence" value="ECO:0007669"/>
    <property type="project" value="UniProtKB-SubCell"/>
</dbReference>
<dbReference type="GO" id="GO:0000287">
    <property type="term" value="F:magnesium ion binding"/>
    <property type="evidence" value="ECO:0007669"/>
    <property type="project" value="UniProtKB-UniRule"/>
</dbReference>
<dbReference type="GO" id="GO:0004635">
    <property type="term" value="F:phosphoribosyl-AMP cyclohydrolase activity"/>
    <property type="evidence" value="ECO:0007669"/>
    <property type="project" value="UniProtKB-UniRule"/>
</dbReference>
<dbReference type="GO" id="GO:0008270">
    <property type="term" value="F:zinc ion binding"/>
    <property type="evidence" value="ECO:0007669"/>
    <property type="project" value="UniProtKB-UniRule"/>
</dbReference>
<dbReference type="GO" id="GO:0000105">
    <property type="term" value="P:L-histidine biosynthetic process"/>
    <property type="evidence" value="ECO:0007669"/>
    <property type="project" value="UniProtKB-UniRule"/>
</dbReference>
<dbReference type="FunFam" id="3.10.20.810:FF:000001">
    <property type="entry name" value="Histidine biosynthesis bifunctional protein HisIE"/>
    <property type="match status" value="1"/>
</dbReference>
<dbReference type="Gene3D" id="3.10.20.810">
    <property type="entry name" value="Phosphoribosyl-AMP cyclohydrolase"/>
    <property type="match status" value="1"/>
</dbReference>
<dbReference type="HAMAP" id="MF_01021">
    <property type="entry name" value="HisI"/>
    <property type="match status" value="1"/>
</dbReference>
<dbReference type="InterPro" id="IPR026660">
    <property type="entry name" value="PRA-CH"/>
</dbReference>
<dbReference type="InterPro" id="IPR002496">
    <property type="entry name" value="PRib_AMP_CycHydrolase_dom"/>
</dbReference>
<dbReference type="InterPro" id="IPR038019">
    <property type="entry name" value="PRib_AMP_CycHydrolase_sf"/>
</dbReference>
<dbReference type="NCBIfam" id="NF000768">
    <property type="entry name" value="PRK00051.1"/>
    <property type="match status" value="1"/>
</dbReference>
<dbReference type="PANTHER" id="PTHR42945">
    <property type="entry name" value="HISTIDINE BIOSYNTHESIS BIFUNCTIONAL PROTEIN"/>
    <property type="match status" value="1"/>
</dbReference>
<dbReference type="PANTHER" id="PTHR42945:SF1">
    <property type="entry name" value="HISTIDINE BIOSYNTHESIS BIFUNCTIONAL PROTEIN HIS7"/>
    <property type="match status" value="1"/>
</dbReference>
<dbReference type="Pfam" id="PF01502">
    <property type="entry name" value="PRA-CH"/>
    <property type="match status" value="1"/>
</dbReference>
<dbReference type="SUPFAM" id="SSF141734">
    <property type="entry name" value="HisI-like"/>
    <property type="match status" value="1"/>
</dbReference>
<protein>
    <recommendedName>
        <fullName evidence="1">Phosphoribosyl-AMP cyclohydrolase</fullName>
        <shortName evidence="1">PRA-CH</shortName>
        <ecNumber evidence="1">3.5.4.19</ecNumber>
    </recommendedName>
</protein>
<proteinExistence type="inferred from homology"/>
<sequence length="134" mass="15389">MKDWLDEIHWNADGLVPAIAQDHETGRVLMMAWMNREALALTASENRAIYWSRSRGKLWRKGEESGHVQKLHELRLDCDADVVILMVEQVGGIACHTGRESCFYRVFENGAWKTIDPVLKDPDAIYEHAGHHHE</sequence>
<reference key="1">
    <citation type="journal article" date="2006" name="Genome Biol.">
        <title>Genomic analysis reveals that Pseudomonas aeruginosa virulence is combinatorial.</title>
        <authorList>
            <person name="Lee D.G."/>
            <person name="Urbach J.M."/>
            <person name="Wu G."/>
            <person name="Liberati N.T."/>
            <person name="Feinbaum R.L."/>
            <person name="Miyata S."/>
            <person name="Diggins L.T."/>
            <person name="He J."/>
            <person name="Saucier M."/>
            <person name="Deziel E."/>
            <person name="Friedman L."/>
            <person name="Li L."/>
            <person name="Grills G."/>
            <person name="Montgomery K."/>
            <person name="Kucherlapati R."/>
            <person name="Rahme L.G."/>
            <person name="Ausubel F.M."/>
        </authorList>
    </citation>
    <scope>NUCLEOTIDE SEQUENCE [LARGE SCALE GENOMIC DNA]</scope>
    <source>
        <strain>UCBPP-PA14</strain>
    </source>
</reference>
<organism>
    <name type="scientific">Pseudomonas aeruginosa (strain UCBPP-PA14)</name>
    <dbReference type="NCBI Taxonomy" id="208963"/>
    <lineage>
        <taxon>Bacteria</taxon>
        <taxon>Pseudomonadati</taxon>
        <taxon>Pseudomonadota</taxon>
        <taxon>Gammaproteobacteria</taxon>
        <taxon>Pseudomonadales</taxon>
        <taxon>Pseudomonadaceae</taxon>
        <taxon>Pseudomonas</taxon>
    </lineage>
</organism>